<gene>
    <name evidence="1" type="primary">mrdA</name>
    <name type="synonym">pbp2</name>
    <name type="ordered locus">HI_0032</name>
</gene>
<reference key="1">
    <citation type="journal article" date="1995" name="Science">
        <title>Whole-genome random sequencing and assembly of Haemophilus influenzae Rd.</title>
        <authorList>
            <person name="Fleischmann R.D."/>
            <person name="Adams M.D."/>
            <person name="White O."/>
            <person name="Clayton R.A."/>
            <person name="Kirkness E.F."/>
            <person name="Kerlavage A.R."/>
            <person name="Bult C.J."/>
            <person name="Tomb J.-F."/>
            <person name="Dougherty B.A."/>
            <person name="Merrick J.M."/>
            <person name="McKenney K."/>
            <person name="Sutton G.G."/>
            <person name="FitzHugh W."/>
            <person name="Fields C.A."/>
            <person name="Gocayne J.D."/>
            <person name="Scott J.D."/>
            <person name="Shirley R."/>
            <person name="Liu L.-I."/>
            <person name="Glodek A."/>
            <person name="Kelley J.M."/>
            <person name="Weidman J.F."/>
            <person name="Phillips C.A."/>
            <person name="Spriggs T."/>
            <person name="Hedblom E."/>
            <person name="Cotton M.D."/>
            <person name="Utterback T.R."/>
            <person name="Hanna M.C."/>
            <person name="Nguyen D.T."/>
            <person name="Saudek D.M."/>
            <person name="Brandon R.C."/>
            <person name="Fine L.D."/>
            <person name="Fritchman J.L."/>
            <person name="Fuhrmann J.L."/>
            <person name="Geoghagen N.S.M."/>
            <person name="Gnehm C.L."/>
            <person name="McDonald L.A."/>
            <person name="Small K.V."/>
            <person name="Fraser C.M."/>
            <person name="Smith H.O."/>
            <person name="Venter J.C."/>
        </authorList>
    </citation>
    <scope>NUCLEOTIDE SEQUENCE [LARGE SCALE GENOMIC DNA]</scope>
    <source>
        <strain>ATCC 51907 / DSM 11121 / KW20 / Rd</strain>
    </source>
</reference>
<name>MRDA_HAEIN</name>
<feature type="chain" id="PRO_0000195448" description="Peptidoglycan D,D-transpeptidase MrdA">
    <location>
        <begin position="1"/>
        <end position="651"/>
    </location>
</feature>
<feature type="transmembrane region" description="Helical" evidence="1">
    <location>
        <begin position="30"/>
        <end position="50"/>
    </location>
</feature>
<feature type="active site" description="Acyl-ester intermediate" evidence="1">
    <location>
        <position position="338"/>
    </location>
</feature>
<protein>
    <recommendedName>
        <fullName evidence="1">Peptidoglycan D,D-transpeptidase MrdA</fullName>
        <ecNumber evidence="1">3.4.16.4</ecNumber>
    </recommendedName>
    <alternativeName>
        <fullName evidence="1">Penicillin-binding protein 2</fullName>
        <shortName evidence="1">PBP-2</shortName>
    </alternativeName>
</protein>
<dbReference type="EC" id="3.4.16.4" evidence="1"/>
<dbReference type="EMBL" id="L42023">
    <property type="protein sequence ID" value="AAC21710.1"/>
    <property type="molecule type" value="Genomic_DNA"/>
</dbReference>
<dbReference type="PIR" id="C64044">
    <property type="entry name" value="C64044"/>
</dbReference>
<dbReference type="RefSeq" id="NP_438205.1">
    <property type="nucleotide sequence ID" value="NC_000907.1"/>
</dbReference>
<dbReference type="SMR" id="P44469"/>
<dbReference type="STRING" id="71421.HI_0032"/>
<dbReference type="DrugBank" id="DB00303">
    <property type="generic name" value="Ertapenem"/>
</dbReference>
<dbReference type="EnsemblBacteria" id="AAC21710">
    <property type="protein sequence ID" value="AAC21710"/>
    <property type="gene ID" value="HI_0032"/>
</dbReference>
<dbReference type="KEGG" id="hin:HI_0032"/>
<dbReference type="PATRIC" id="fig|71421.8.peg.32"/>
<dbReference type="eggNOG" id="COG0768">
    <property type="taxonomic scope" value="Bacteria"/>
</dbReference>
<dbReference type="HOGENOM" id="CLU_009289_1_2_6"/>
<dbReference type="OrthoDB" id="9766847at2"/>
<dbReference type="PhylomeDB" id="P44469"/>
<dbReference type="BioCyc" id="HINF71421:G1GJ1-32-MONOMER"/>
<dbReference type="UniPathway" id="UPA00219"/>
<dbReference type="Proteomes" id="UP000000579">
    <property type="component" value="Chromosome"/>
</dbReference>
<dbReference type="GO" id="GO:0005886">
    <property type="term" value="C:plasma membrane"/>
    <property type="evidence" value="ECO:0000318"/>
    <property type="project" value="GO_Central"/>
</dbReference>
<dbReference type="GO" id="GO:0008658">
    <property type="term" value="F:penicillin binding"/>
    <property type="evidence" value="ECO:0000318"/>
    <property type="project" value="GO_Central"/>
</dbReference>
<dbReference type="GO" id="GO:0071972">
    <property type="term" value="F:peptidoglycan L,D-transpeptidase activity"/>
    <property type="evidence" value="ECO:0000318"/>
    <property type="project" value="GO_Central"/>
</dbReference>
<dbReference type="GO" id="GO:0009002">
    <property type="term" value="F:serine-type D-Ala-D-Ala carboxypeptidase activity"/>
    <property type="evidence" value="ECO:0007669"/>
    <property type="project" value="UniProtKB-UniRule"/>
</dbReference>
<dbReference type="GO" id="GO:0071555">
    <property type="term" value="P:cell wall organization"/>
    <property type="evidence" value="ECO:0000318"/>
    <property type="project" value="GO_Central"/>
</dbReference>
<dbReference type="GO" id="GO:0009252">
    <property type="term" value="P:peptidoglycan biosynthetic process"/>
    <property type="evidence" value="ECO:0007669"/>
    <property type="project" value="UniProtKB-UniRule"/>
</dbReference>
<dbReference type="GO" id="GO:0006508">
    <property type="term" value="P:proteolysis"/>
    <property type="evidence" value="ECO:0007669"/>
    <property type="project" value="UniProtKB-KW"/>
</dbReference>
<dbReference type="GO" id="GO:0008360">
    <property type="term" value="P:regulation of cell shape"/>
    <property type="evidence" value="ECO:0007669"/>
    <property type="project" value="UniProtKB-KW"/>
</dbReference>
<dbReference type="FunFam" id="3.30.1390.30:FF:000001">
    <property type="entry name" value="Peptidoglycan D,D-transpeptidase MrdA"/>
    <property type="match status" value="1"/>
</dbReference>
<dbReference type="FunFam" id="3.40.710.10:FF:000004">
    <property type="entry name" value="Peptidoglycan D,D-transpeptidase MrdA"/>
    <property type="match status" value="1"/>
</dbReference>
<dbReference type="Gene3D" id="3.40.710.10">
    <property type="entry name" value="DD-peptidase/beta-lactamase superfamily"/>
    <property type="match status" value="1"/>
</dbReference>
<dbReference type="Gene3D" id="3.90.1310.10">
    <property type="entry name" value="Penicillin-binding protein 2a (Domain 2)"/>
    <property type="match status" value="1"/>
</dbReference>
<dbReference type="Gene3D" id="3.30.1390.30">
    <property type="entry name" value="Penicillin-binding protein 2a, domain 3"/>
    <property type="match status" value="1"/>
</dbReference>
<dbReference type="HAMAP" id="MF_02081">
    <property type="entry name" value="MrdA_transpept"/>
    <property type="match status" value="1"/>
</dbReference>
<dbReference type="InterPro" id="IPR050515">
    <property type="entry name" value="Bact_Transpept/Beta-Lactamase"/>
</dbReference>
<dbReference type="InterPro" id="IPR012338">
    <property type="entry name" value="Beta-lactam/transpept-like"/>
</dbReference>
<dbReference type="InterPro" id="IPR005311">
    <property type="entry name" value="PBP_dimer"/>
</dbReference>
<dbReference type="InterPro" id="IPR036138">
    <property type="entry name" value="PBP_dimer_sf"/>
</dbReference>
<dbReference type="InterPro" id="IPR001460">
    <property type="entry name" value="PCN-bd_Tpept"/>
</dbReference>
<dbReference type="InterPro" id="IPR017790">
    <property type="entry name" value="Penicillin-binding_protein_2"/>
</dbReference>
<dbReference type="NCBIfam" id="TIGR03423">
    <property type="entry name" value="pbp2_mrdA"/>
    <property type="match status" value="1"/>
</dbReference>
<dbReference type="PANTHER" id="PTHR30627">
    <property type="entry name" value="PEPTIDOGLYCAN D,D-TRANSPEPTIDASE"/>
    <property type="match status" value="1"/>
</dbReference>
<dbReference type="PANTHER" id="PTHR30627:SF2">
    <property type="entry name" value="PEPTIDOGLYCAN D,D-TRANSPEPTIDASE MRDA"/>
    <property type="match status" value="1"/>
</dbReference>
<dbReference type="Pfam" id="PF03717">
    <property type="entry name" value="PBP_dimer"/>
    <property type="match status" value="1"/>
</dbReference>
<dbReference type="Pfam" id="PF00905">
    <property type="entry name" value="Transpeptidase"/>
    <property type="match status" value="1"/>
</dbReference>
<dbReference type="SUPFAM" id="SSF56601">
    <property type="entry name" value="beta-lactamase/transpeptidase-like"/>
    <property type="match status" value="1"/>
</dbReference>
<dbReference type="SUPFAM" id="SSF56519">
    <property type="entry name" value="Penicillin binding protein dimerisation domain"/>
    <property type="match status" value="1"/>
</dbReference>
<proteinExistence type="inferred from homology"/>
<comment type="function">
    <text evidence="1">Catalyzes cross-linking of the peptidoglycan cell wall.</text>
</comment>
<comment type="catalytic activity">
    <reaction evidence="1">
        <text>Preferential cleavage: (Ac)2-L-Lys-D-Ala-|-D-Ala. Also transpeptidation of peptidyl-alanyl moieties that are N-acyl substituents of D-alanine.</text>
        <dbReference type="EC" id="3.4.16.4"/>
    </reaction>
</comment>
<comment type="pathway">
    <text evidence="1">Cell wall biogenesis; peptidoglycan biosynthesis.</text>
</comment>
<comment type="subcellular location">
    <subcellularLocation>
        <location evidence="1">Cell inner membrane</location>
        <topology evidence="1">Single-pass membrane protein</topology>
    </subcellularLocation>
</comment>
<comment type="domain">
    <text>Has a penicillin insensitive transglycosylase domain (formation of linear glycan strands) and a penicillin-sensitive transpeptidase domain (cross-linking of the peptide subunits).</text>
</comment>
<comment type="similarity">
    <text evidence="1">Belongs to the transpeptidase family. MrdA subfamily.</text>
</comment>
<accession>P44469</accession>
<sequence length="651" mass="73813">MNLKKFFNTPTHEPFRDKKAERNLFARRTLVAFLGILLLTGVLFTNIYQLQIVNFDTYQTRSNGNRIKLLPLPPTRGLIYDRYGKLLAENLTFFGLYIVPEKTENLDRTLDELRYIVGLTDNDIENFKKERRRGTRYTPILLKPNLTEEQISRFAVNGYQYPSLEVRPYFKRHYLYGETMAHILGYVGKMNDKDVERLKREDKFANYAGTNDIGKLGIERYYEDILQGTTGFEEVEINNRGKVIRTLRSRPAVAGKSIHLTIDLALQRYITELLSGLKGAVVVLDPKDSSVLAMVSTPSYDNNLFVDGISSEDYKRLLNDLARPLYSRATQGAYPPASTVKPFIAVAAQTENVITPNTTIFDPGYWVLPNSTKRFRDWKKTGHGDTDLNKAITESSDTYFYQVAYNMGIDRLSNWMKDFGFGMPTGIEIQEETAANIPTREWKQKRYKRPWVQGDTISVGIGQGYWTATPLQVAKATTILVNNGKVNTPHLMKAIEGAVLEPYEDPLLYPDINTPKVAAWEAAKRGMYNVVNAANGTGRKAFADANYRVAGKSGTAQVFSLKENEKYNTAGLKKELHDHAWFTAYAPYDNPKLVVTVILENAGGGSSNAAPLARKVMDYYLNQRLPQVEKYNVPIQQKKDLSQESEQINGR</sequence>
<evidence type="ECO:0000255" key="1">
    <source>
        <dbReference type="HAMAP-Rule" id="MF_02081"/>
    </source>
</evidence>
<keyword id="KW-0121">Carboxypeptidase</keyword>
<keyword id="KW-0997">Cell inner membrane</keyword>
<keyword id="KW-1003">Cell membrane</keyword>
<keyword id="KW-0133">Cell shape</keyword>
<keyword id="KW-0961">Cell wall biogenesis/degradation</keyword>
<keyword id="KW-0378">Hydrolase</keyword>
<keyword id="KW-0472">Membrane</keyword>
<keyword id="KW-0573">Peptidoglycan synthesis</keyword>
<keyword id="KW-0645">Protease</keyword>
<keyword id="KW-1185">Reference proteome</keyword>
<keyword id="KW-0812">Transmembrane</keyword>
<keyword id="KW-1133">Transmembrane helix</keyword>
<organism>
    <name type="scientific">Haemophilus influenzae (strain ATCC 51907 / DSM 11121 / KW20 / Rd)</name>
    <dbReference type="NCBI Taxonomy" id="71421"/>
    <lineage>
        <taxon>Bacteria</taxon>
        <taxon>Pseudomonadati</taxon>
        <taxon>Pseudomonadota</taxon>
        <taxon>Gammaproteobacteria</taxon>
        <taxon>Pasteurellales</taxon>
        <taxon>Pasteurellaceae</taxon>
        <taxon>Haemophilus</taxon>
    </lineage>
</organism>